<sequence>MIDETLLEAEEKMERAIEHAKEEFGAIRTGRANAAMFSKIVIDYYGSPTPLPQMASIGVPEPRMVIIKPYDTSQTNAMEKAIRDSDLGVNPNNEGNQLRILLPQMTEERRREMIKVARHKGEEAKVAVRNVRRKAKEELDRLVKAGEVGEDDGRRAEKELDDLTQRFVGTVDELIKHKEAELLEV</sequence>
<accession>A4X4J5</accession>
<dbReference type="EMBL" id="CP000667">
    <property type="protein sequence ID" value="ABP53795.1"/>
    <property type="molecule type" value="Genomic_DNA"/>
</dbReference>
<dbReference type="RefSeq" id="WP_011905227.1">
    <property type="nucleotide sequence ID" value="NC_009380.1"/>
</dbReference>
<dbReference type="SMR" id="A4X4J5"/>
<dbReference type="STRING" id="369723.Strop_1325"/>
<dbReference type="KEGG" id="stp:Strop_1325"/>
<dbReference type="PATRIC" id="fig|369723.5.peg.1351"/>
<dbReference type="eggNOG" id="COG0233">
    <property type="taxonomic scope" value="Bacteria"/>
</dbReference>
<dbReference type="HOGENOM" id="CLU_073981_2_0_11"/>
<dbReference type="Proteomes" id="UP000000235">
    <property type="component" value="Chromosome"/>
</dbReference>
<dbReference type="GO" id="GO:0005737">
    <property type="term" value="C:cytoplasm"/>
    <property type="evidence" value="ECO:0007669"/>
    <property type="project" value="UniProtKB-SubCell"/>
</dbReference>
<dbReference type="GO" id="GO:0043023">
    <property type="term" value="F:ribosomal large subunit binding"/>
    <property type="evidence" value="ECO:0007669"/>
    <property type="project" value="TreeGrafter"/>
</dbReference>
<dbReference type="GO" id="GO:0006415">
    <property type="term" value="P:translational termination"/>
    <property type="evidence" value="ECO:0007669"/>
    <property type="project" value="UniProtKB-UniRule"/>
</dbReference>
<dbReference type="CDD" id="cd00520">
    <property type="entry name" value="RRF"/>
    <property type="match status" value="1"/>
</dbReference>
<dbReference type="FunFam" id="1.10.132.20:FF:000001">
    <property type="entry name" value="Ribosome-recycling factor"/>
    <property type="match status" value="1"/>
</dbReference>
<dbReference type="FunFam" id="3.30.1360.40:FF:000001">
    <property type="entry name" value="Ribosome-recycling factor"/>
    <property type="match status" value="1"/>
</dbReference>
<dbReference type="Gene3D" id="3.30.1360.40">
    <property type="match status" value="1"/>
</dbReference>
<dbReference type="Gene3D" id="1.10.132.20">
    <property type="entry name" value="Ribosome-recycling factor"/>
    <property type="match status" value="1"/>
</dbReference>
<dbReference type="HAMAP" id="MF_00040">
    <property type="entry name" value="RRF"/>
    <property type="match status" value="1"/>
</dbReference>
<dbReference type="InterPro" id="IPR002661">
    <property type="entry name" value="Ribosome_recyc_fac"/>
</dbReference>
<dbReference type="InterPro" id="IPR023584">
    <property type="entry name" value="Ribosome_recyc_fac_dom"/>
</dbReference>
<dbReference type="InterPro" id="IPR036191">
    <property type="entry name" value="RRF_sf"/>
</dbReference>
<dbReference type="NCBIfam" id="TIGR00496">
    <property type="entry name" value="frr"/>
    <property type="match status" value="1"/>
</dbReference>
<dbReference type="PANTHER" id="PTHR20982:SF3">
    <property type="entry name" value="MITOCHONDRIAL RIBOSOME RECYCLING FACTOR PSEUDO 1"/>
    <property type="match status" value="1"/>
</dbReference>
<dbReference type="PANTHER" id="PTHR20982">
    <property type="entry name" value="RIBOSOME RECYCLING FACTOR"/>
    <property type="match status" value="1"/>
</dbReference>
<dbReference type="Pfam" id="PF01765">
    <property type="entry name" value="RRF"/>
    <property type="match status" value="1"/>
</dbReference>
<dbReference type="SUPFAM" id="SSF55194">
    <property type="entry name" value="Ribosome recycling factor, RRF"/>
    <property type="match status" value="1"/>
</dbReference>
<protein>
    <recommendedName>
        <fullName evidence="1">Ribosome-recycling factor</fullName>
        <shortName evidence="1">RRF</shortName>
    </recommendedName>
    <alternativeName>
        <fullName evidence="1">Ribosome-releasing factor</fullName>
    </alternativeName>
</protein>
<organism>
    <name type="scientific">Salinispora tropica (strain ATCC BAA-916 / DSM 44818 / JCM 13857 / NBRC 105044 / CNB-440)</name>
    <dbReference type="NCBI Taxonomy" id="369723"/>
    <lineage>
        <taxon>Bacteria</taxon>
        <taxon>Bacillati</taxon>
        <taxon>Actinomycetota</taxon>
        <taxon>Actinomycetes</taxon>
        <taxon>Micromonosporales</taxon>
        <taxon>Micromonosporaceae</taxon>
        <taxon>Salinispora</taxon>
    </lineage>
</organism>
<keyword id="KW-0963">Cytoplasm</keyword>
<keyword id="KW-0648">Protein biosynthesis</keyword>
<keyword id="KW-1185">Reference proteome</keyword>
<feature type="chain" id="PRO_1000074599" description="Ribosome-recycling factor">
    <location>
        <begin position="1"/>
        <end position="185"/>
    </location>
</feature>
<proteinExistence type="inferred from homology"/>
<comment type="function">
    <text evidence="1">Responsible for the release of ribosomes from messenger RNA at the termination of protein biosynthesis. May increase the efficiency of translation by recycling ribosomes from one round of translation to another.</text>
</comment>
<comment type="subcellular location">
    <subcellularLocation>
        <location evidence="1">Cytoplasm</location>
    </subcellularLocation>
</comment>
<comment type="similarity">
    <text evidence="1">Belongs to the RRF family.</text>
</comment>
<name>RRF_SALTO</name>
<reference key="1">
    <citation type="journal article" date="2007" name="Proc. Natl. Acad. Sci. U.S.A.">
        <title>Genome sequencing reveals complex secondary metabolome in the marine actinomycete Salinispora tropica.</title>
        <authorList>
            <person name="Udwary D.W."/>
            <person name="Zeigler L."/>
            <person name="Asolkar R.N."/>
            <person name="Singan V."/>
            <person name="Lapidus A."/>
            <person name="Fenical W."/>
            <person name="Jensen P.R."/>
            <person name="Moore B.S."/>
        </authorList>
    </citation>
    <scope>NUCLEOTIDE SEQUENCE [LARGE SCALE GENOMIC DNA]</scope>
    <source>
        <strain>ATCC BAA-916 / DSM 44818 / JCM 13857 / NBRC 105044 / CNB-440</strain>
    </source>
</reference>
<gene>
    <name evidence="1" type="primary">frr</name>
    <name type="ordered locus">Strop_1325</name>
</gene>
<evidence type="ECO:0000255" key="1">
    <source>
        <dbReference type="HAMAP-Rule" id="MF_00040"/>
    </source>
</evidence>